<accession>B3QIM6</accession>
<evidence type="ECO:0000255" key="1">
    <source>
        <dbReference type="HAMAP-Rule" id="MF_00151"/>
    </source>
</evidence>
<protein>
    <recommendedName>
        <fullName evidence="1">Phosphopantetheine adenylyltransferase</fullName>
        <ecNumber evidence="1">2.7.7.3</ecNumber>
    </recommendedName>
    <alternativeName>
        <fullName evidence="1">Dephospho-CoA pyrophosphorylase</fullName>
    </alternativeName>
    <alternativeName>
        <fullName evidence="1">Pantetheine-phosphate adenylyltransferase</fullName>
        <shortName evidence="1">PPAT</shortName>
    </alternativeName>
</protein>
<dbReference type="EC" id="2.7.7.3" evidence="1"/>
<dbReference type="EMBL" id="CP001096">
    <property type="protein sequence ID" value="ACF01379.1"/>
    <property type="molecule type" value="Genomic_DNA"/>
</dbReference>
<dbReference type="RefSeq" id="WP_012496045.1">
    <property type="nucleotide sequence ID" value="NC_011004.1"/>
</dbReference>
<dbReference type="SMR" id="B3QIM6"/>
<dbReference type="KEGG" id="rpt:Rpal_2871"/>
<dbReference type="HOGENOM" id="CLU_100149_0_1_5"/>
<dbReference type="OrthoDB" id="9806661at2"/>
<dbReference type="UniPathway" id="UPA00241">
    <property type="reaction ID" value="UER00355"/>
</dbReference>
<dbReference type="Proteomes" id="UP000001725">
    <property type="component" value="Chromosome"/>
</dbReference>
<dbReference type="GO" id="GO:0005737">
    <property type="term" value="C:cytoplasm"/>
    <property type="evidence" value="ECO:0007669"/>
    <property type="project" value="UniProtKB-SubCell"/>
</dbReference>
<dbReference type="GO" id="GO:0005524">
    <property type="term" value="F:ATP binding"/>
    <property type="evidence" value="ECO:0007669"/>
    <property type="project" value="UniProtKB-KW"/>
</dbReference>
<dbReference type="GO" id="GO:0004595">
    <property type="term" value="F:pantetheine-phosphate adenylyltransferase activity"/>
    <property type="evidence" value="ECO:0007669"/>
    <property type="project" value="UniProtKB-UniRule"/>
</dbReference>
<dbReference type="GO" id="GO:0015937">
    <property type="term" value="P:coenzyme A biosynthetic process"/>
    <property type="evidence" value="ECO:0007669"/>
    <property type="project" value="UniProtKB-UniRule"/>
</dbReference>
<dbReference type="CDD" id="cd02163">
    <property type="entry name" value="PPAT"/>
    <property type="match status" value="1"/>
</dbReference>
<dbReference type="Gene3D" id="3.40.50.620">
    <property type="entry name" value="HUPs"/>
    <property type="match status" value="1"/>
</dbReference>
<dbReference type="HAMAP" id="MF_00151">
    <property type="entry name" value="PPAT_bact"/>
    <property type="match status" value="1"/>
</dbReference>
<dbReference type="InterPro" id="IPR004821">
    <property type="entry name" value="Cyt_trans-like"/>
</dbReference>
<dbReference type="InterPro" id="IPR001980">
    <property type="entry name" value="PPAT"/>
</dbReference>
<dbReference type="InterPro" id="IPR014729">
    <property type="entry name" value="Rossmann-like_a/b/a_fold"/>
</dbReference>
<dbReference type="NCBIfam" id="TIGR01510">
    <property type="entry name" value="coaD_prev_kdtB"/>
    <property type="match status" value="1"/>
</dbReference>
<dbReference type="NCBIfam" id="TIGR00125">
    <property type="entry name" value="cyt_tran_rel"/>
    <property type="match status" value="1"/>
</dbReference>
<dbReference type="PANTHER" id="PTHR21342">
    <property type="entry name" value="PHOSPHOPANTETHEINE ADENYLYLTRANSFERASE"/>
    <property type="match status" value="1"/>
</dbReference>
<dbReference type="PANTHER" id="PTHR21342:SF1">
    <property type="entry name" value="PHOSPHOPANTETHEINE ADENYLYLTRANSFERASE"/>
    <property type="match status" value="1"/>
</dbReference>
<dbReference type="Pfam" id="PF01467">
    <property type="entry name" value="CTP_transf_like"/>
    <property type="match status" value="1"/>
</dbReference>
<dbReference type="PRINTS" id="PR01020">
    <property type="entry name" value="LPSBIOSNTHSS"/>
</dbReference>
<dbReference type="SUPFAM" id="SSF52374">
    <property type="entry name" value="Nucleotidylyl transferase"/>
    <property type="match status" value="1"/>
</dbReference>
<proteinExistence type="inferred from homology"/>
<feature type="chain" id="PRO_1000096831" description="Phosphopantetheine adenylyltransferase">
    <location>
        <begin position="1"/>
        <end position="169"/>
    </location>
</feature>
<feature type="binding site" evidence="1">
    <location>
        <begin position="10"/>
        <end position="11"/>
    </location>
    <ligand>
        <name>ATP</name>
        <dbReference type="ChEBI" id="CHEBI:30616"/>
    </ligand>
</feature>
<feature type="binding site" evidence="1">
    <location>
        <position position="10"/>
    </location>
    <ligand>
        <name>substrate</name>
    </ligand>
</feature>
<feature type="binding site" evidence="1">
    <location>
        <position position="18"/>
    </location>
    <ligand>
        <name>ATP</name>
        <dbReference type="ChEBI" id="CHEBI:30616"/>
    </ligand>
</feature>
<feature type="binding site" evidence="1">
    <location>
        <position position="42"/>
    </location>
    <ligand>
        <name>substrate</name>
    </ligand>
</feature>
<feature type="binding site" evidence="1">
    <location>
        <position position="79"/>
    </location>
    <ligand>
        <name>substrate</name>
    </ligand>
</feature>
<feature type="binding site" evidence="1">
    <location>
        <position position="93"/>
    </location>
    <ligand>
        <name>substrate</name>
    </ligand>
</feature>
<feature type="binding site" evidence="1">
    <location>
        <begin position="94"/>
        <end position="96"/>
    </location>
    <ligand>
        <name>ATP</name>
        <dbReference type="ChEBI" id="CHEBI:30616"/>
    </ligand>
</feature>
<feature type="binding site" evidence="1">
    <location>
        <position position="104"/>
    </location>
    <ligand>
        <name>ATP</name>
        <dbReference type="ChEBI" id="CHEBI:30616"/>
    </ligand>
</feature>
<feature type="binding site" evidence="1">
    <location>
        <begin position="129"/>
        <end position="135"/>
    </location>
    <ligand>
        <name>ATP</name>
        <dbReference type="ChEBI" id="CHEBI:30616"/>
    </ligand>
</feature>
<feature type="site" description="Transition state stabilizer" evidence="1">
    <location>
        <position position="18"/>
    </location>
</feature>
<comment type="function">
    <text evidence="1">Reversibly transfers an adenylyl group from ATP to 4'-phosphopantetheine, yielding dephospho-CoA (dPCoA) and pyrophosphate.</text>
</comment>
<comment type="catalytic activity">
    <reaction evidence="1">
        <text>(R)-4'-phosphopantetheine + ATP + H(+) = 3'-dephospho-CoA + diphosphate</text>
        <dbReference type="Rhea" id="RHEA:19801"/>
        <dbReference type="ChEBI" id="CHEBI:15378"/>
        <dbReference type="ChEBI" id="CHEBI:30616"/>
        <dbReference type="ChEBI" id="CHEBI:33019"/>
        <dbReference type="ChEBI" id="CHEBI:57328"/>
        <dbReference type="ChEBI" id="CHEBI:61723"/>
        <dbReference type="EC" id="2.7.7.3"/>
    </reaction>
</comment>
<comment type="cofactor">
    <cofactor evidence="1">
        <name>Mg(2+)</name>
        <dbReference type="ChEBI" id="CHEBI:18420"/>
    </cofactor>
</comment>
<comment type="pathway">
    <text evidence="1">Cofactor biosynthesis; coenzyme A biosynthesis; CoA from (R)-pantothenate: step 4/5.</text>
</comment>
<comment type="subunit">
    <text evidence="1">Homohexamer.</text>
</comment>
<comment type="subcellular location">
    <subcellularLocation>
        <location evidence="1">Cytoplasm</location>
    </subcellularLocation>
</comment>
<comment type="similarity">
    <text evidence="1">Belongs to the bacterial CoaD family.</text>
</comment>
<gene>
    <name evidence="1" type="primary">coaD</name>
    <name type="ordered locus">Rpal_2871</name>
</gene>
<organism>
    <name type="scientific">Rhodopseudomonas palustris (strain TIE-1)</name>
    <dbReference type="NCBI Taxonomy" id="395960"/>
    <lineage>
        <taxon>Bacteria</taxon>
        <taxon>Pseudomonadati</taxon>
        <taxon>Pseudomonadota</taxon>
        <taxon>Alphaproteobacteria</taxon>
        <taxon>Hyphomicrobiales</taxon>
        <taxon>Nitrobacteraceae</taxon>
        <taxon>Rhodopseudomonas</taxon>
    </lineage>
</organism>
<name>COAD_RHOPT</name>
<sequence>MSRIALYPGSFDPVTNGHLDVVRHAVALCDKLVVAIGIHPGKKPLFTTEERLAMVERVFGPVAKAAGCDFGCTTYDNLTVTAAEKVGATIMIRGLRDGTDLDYEMQIAGMNETMAPAIHTVFLPASVGVRPITATLVRQIAAMGGDVSAFVPAEVASALKSKFAAGSPA</sequence>
<reference key="1">
    <citation type="submission" date="2008-05" db="EMBL/GenBank/DDBJ databases">
        <title>Complete sequence of Rhodopseudomonas palustris TIE-1.</title>
        <authorList>
            <consortium name="US DOE Joint Genome Institute"/>
            <person name="Lucas S."/>
            <person name="Copeland A."/>
            <person name="Lapidus A."/>
            <person name="Glavina del Rio T."/>
            <person name="Dalin E."/>
            <person name="Tice H."/>
            <person name="Pitluck S."/>
            <person name="Chain P."/>
            <person name="Malfatti S."/>
            <person name="Shin M."/>
            <person name="Vergez L."/>
            <person name="Lang D."/>
            <person name="Schmutz J."/>
            <person name="Larimer F."/>
            <person name="Land M."/>
            <person name="Hauser L."/>
            <person name="Kyrpides N."/>
            <person name="Mikhailova N."/>
            <person name="Emerson D."/>
            <person name="Newman D.K."/>
            <person name="Roden E."/>
            <person name="Richardson P."/>
        </authorList>
    </citation>
    <scope>NUCLEOTIDE SEQUENCE [LARGE SCALE GENOMIC DNA]</scope>
    <source>
        <strain>TIE-1</strain>
    </source>
</reference>
<keyword id="KW-0067">ATP-binding</keyword>
<keyword id="KW-0173">Coenzyme A biosynthesis</keyword>
<keyword id="KW-0963">Cytoplasm</keyword>
<keyword id="KW-0460">Magnesium</keyword>
<keyword id="KW-0547">Nucleotide-binding</keyword>
<keyword id="KW-0548">Nucleotidyltransferase</keyword>
<keyword id="KW-0808">Transferase</keyword>